<dbReference type="EMBL" id="AE017220">
    <property type="protein sequence ID" value="AAX67870.1"/>
    <property type="molecule type" value="Genomic_DNA"/>
</dbReference>
<dbReference type="RefSeq" id="WP_001541246.1">
    <property type="nucleotide sequence ID" value="NC_006905.1"/>
</dbReference>
<dbReference type="KEGG" id="sec:SCH_3964"/>
<dbReference type="HOGENOM" id="CLU_028880_0_1_6"/>
<dbReference type="Proteomes" id="UP000000538">
    <property type="component" value="Chromosome"/>
</dbReference>
<dbReference type="GO" id="GO:0005886">
    <property type="term" value="C:plasma membrane"/>
    <property type="evidence" value="ECO:0007669"/>
    <property type="project" value="UniProtKB-SubCell"/>
</dbReference>
<dbReference type="GO" id="GO:0022857">
    <property type="term" value="F:transmembrane transporter activity"/>
    <property type="evidence" value="ECO:0007669"/>
    <property type="project" value="InterPro"/>
</dbReference>
<dbReference type="CDD" id="cd06579">
    <property type="entry name" value="TM_PBP1_transp_AraH_like"/>
    <property type="match status" value="1"/>
</dbReference>
<dbReference type="InterPro" id="IPR001851">
    <property type="entry name" value="ABC_transp_permease"/>
</dbReference>
<dbReference type="NCBIfam" id="NF011961">
    <property type="entry name" value="PRK15432.1"/>
    <property type="match status" value="1"/>
</dbReference>
<dbReference type="PANTHER" id="PTHR32196">
    <property type="entry name" value="ABC TRANSPORTER PERMEASE PROTEIN YPHD-RELATED-RELATED"/>
    <property type="match status" value="1"/>
</dbReference>
<dbReference type="PANTHER" id="PTHR32196:SF29">
    <property type="entry name" value="AUTOINDUCER 2 IMPORT SYSTEM PERMEASE PROTEIN LSRC"/>
    <property type="match status" value="1"/>
</dbReference>
<dbReference type="Pfam" id="PF02653">
    <property type="entry name" value="BPD_transp_2"/>
    <property type="match status" value="1"/>
</dbReference>
<reference key="1">
    <citation type="journal article" date="2005" name="Nucleic Acids Res.">
        <title>The genome sequence of Salmonella enterica serovar Choleraesuis, a highly invasive and resistant zoonotic pathogen.</title>
        <authorList>
            <person name="Chiu C.-H."/>
            <person name="Tang P."/>
            <person name="Chu C."/>
            <person name="Hu S."/>
            <person name="Bao Q."/>
            <person name="Yu J."/>
            <person name="Chou Y.-Y."/>
            <person name="Wang H.-S."/>
            <person name="Lee Y.-S."/>
        </authorList>
    </citation>
    <scope>NUCLEOTIDE SEQUENCE [LARGE SCALE GENOMIC DNA]</scope>
    <source>
        <strain>SC-B67</strain>
    </source>
</reference>
<feature type="chain" id="PRO_0000351346" description="Autoinducer 2 import system permease protein LsrC">
    <location>
        <begin position="1"/>
        <end position="347"/>
    </location>
</feature>
<feature type="transmembrane region" description="Helical" evidence="2">
    <location>
        <begin position="14"/>
        <end position="34"/>
    </location>
</feature>
<feature type="transmembrane region" description="Helical" evidence="2">
    <location>
        <begin position="39"/>
        <end position="59"/>
    </location>
</feature>
<feature type="transmembrane region" description="Helical" evidence="2">
    <location>
        <begin position="72"/>
        <end position="92"/>
    </location>
</feature>
<feature type="transmembrane region" description="Helical" evidence="2">
    <location>
        <begin position="93"/>
        <end position="113"/>
    </location>
</feature>
<feature type="transmembrane region" description="Helical" evidence="2">
    <location>
        <begin position="115"/>
        <end position="135"/>
    </location>
</feature>
<feature type="transmembrane region" description="Helical" evidence="2">
    <location>
        <begin position="155"/>
        <end position="175"/>
    </location>
</feature>
<feature type="transmembrane region" description="Helical" evidence="2">
    <location>
        <begin position="213"/>
        <end position="233"/>
    </location>
</feature>
<feature type="transmembrane region" description="Helical" evidence="2">
    <location>
        <begin position="249"/>
        <end position="269"/>
    </location>
</feature>
<feature type="transmembrane region" description="Helical" evidence="2">
    <location>
        <begin position="284"/>
        <end position="304"/>
    </location>
</feature>
<comment type="function">
    <text evidence="1">Part of the ABC transporter complex LsrABCD involved in autoinducer 2 (AI-2) import. Probably responsible for the translocation of the substrate across the membrane (By similarity).</text>
</comment>
<comment type="subunit">
    <text evidence="1">The complex is composed of two ATP-binding proteins (LsrA), two transmembrane proteins (LsrC and LsrD) and a solute-binding protein (LsrB).</text>
</comment>
<comment type="subcellular location">
    <subcellularLocation>
        <location evidence="1">Cell inner membrane</location>
        <topology evidence="1">Multi-pass membrane protein</topology>
    </subcellularLocation>
</comment>
<comment type="similarity">
    <text evidence="3">Belongs to the binding-protein-dependent transport system permease family. AraH/RbsC subfamily.</text>
</comment>
<proteinExistence type="inferred from homology"/>
<keyword id="KW-0997">Cell inner membrane</keyword>
<keyword id="KW-1003">Cell membrane</keyword>
<keyword id="KW-0472">Membrane</keyword>
<keyword id="KW-0812">Transmembrane</keyword>
<keyword id="KW-1133">Transmembrane helix</keyword>
<keyword id="KW-0813">Transport</keyword>
<evidence type="ECO:0000250" key="1"/>
<evidence type="ECO:0000255" key="2"/>
<evidence type="ECO:0000305" key="3"/>
<organism>
    <name type="scientific">Salmonella choleraesuis (strain SC-B67)</name>
    <dbReference type="NCBI Taxonomy" id="321314"/>
    <lineage>
        <taxon>Bacteria</taxon>
        <taxon>Pseudomonadati</taxon>
        <taxon>Pseudomonadota</taxon>
        <taxon>Gammaproteobacteria</taxon>
        <taxon>Enterobacterales</taxon>
        <taxon>Enterobacteriaceae</taxon>
        <taxon>Salmonella</taxon>
    </lineage>
</organism>
<accession>Q57HE2</accession>
<protein>
    <recommendedName>
        <fullName>Autoinducer 2 import system permease protein LsrC</fullName>
        <shortName>AI-2 import system permease protein LsrC</shortName>
    </recommendedName>
</protein>
<sequence>MLKFIQNNREATALLAIVCLFVFPGALDSQYLSVQTLTMVFSSAQILMLLAIGATMVMLTRNIDVSVGSTTGMCAVLLGVMLNAGYSLPVACLATLILGIVAGFFNGVLVAWLKIPAIVATLGTLGLYRGIMLLWTGGKWIEGLPAGLKQLSAPVFLGISAIGWFTLVLALLMAWLLAKTAFGRNFYATGDNLQGARQLGVRTEMVRIMAFSLNGGMAALAGIVFTSQIGFIPNQTGTGLEMKAIAACVLGGISLLGGSGTVIGAILGAYFLTQIDSVLVLLRIPAWWNDFIAGLVLLGVLVFDGRLRCALQRNLRRQKYARFISPPTPLQAEAKTHAQQNKNKEVA</sequence>
<name>LSRC_SALCH</name>
<gene>
    <name type="primary">lsrC</name>
    <name type="ordered locus">SCH_3964</name>
</gene>